<reference key="1">
    <citation type="submission" date="2017-03" db="EMBL/GenBank/DDBJ databases">
        <title>Complete genome sequence of Rhodovulum sp. MB263.</title>
        <authorList>
            <person name="Nagao N."/>
            <person name="Yonekawa C."/>
            <person name="Hiraishi A."/>
            <person name="Kikuchi Y."/>
            <person name="Hirose Y."/>
        </authorList>
    </citation>
    <scope>NUCLEOTIDE SEQUENCE [LARGE SCALE GENOMIC DNA]</scope>
    <source>
        <strain>MB263</strain>
    </source>
</reference>
<reference key="2">
    <citation type="journal article" date="2021" name="Cell">
        <title>Cyclic CMP and cyclic UMP mediate bacterial immunity against phages.</title>
        <authorList>
            <person name="Tal N."/>
            <person name="Morehouse B.R."/>
            <person name="Millman A."/>
            <person name="Stokar-Avihail A."/>
            <person name="Avraham C."/>
            <person name="Fedorenko T."/>
            <person name="Yirmiya E."/>
            <person name="Herbst E."/>
            <person name="Brandis A."/>
            <person name="Mehlman T."/>
            <person name="Oppenheimer-Shaanan Y."/>
            <person name="Keszei A.F.A."/>
            <person name="Shao S."/>
            <person name="Amitai G."/>
            <person name="Kranzusch P.J."/>
            <person name="Sorek R."/>
        </authorList>
    </citation>
    <scope>PROBABLE FUNCTION</scope>
    <scope>CLASSIFICATION</scope>
    <source>
        <strain>MB263</strain>
    </source>
</reference>
<name>PCTIR_RHOS2</name>
<sequence>MVGGDEVIANSFLEAGELVSFKRGEDIVSQGDVEDDSVYFLLSGAADVFVNGKRRDDIQRTAPITVGEMSALNPAQKRSATVRAASRQLVALKVEGETFRKVVGENREFLRRVHEDFSGRGRQAILATGISRRTSGWNWTVISLTAGVLSAAAIWYTLRVDGNPVFVRVLLPLVVGLTIFLLTLLADPVYRFFRLGTLCVGAILVDEALQWQVRGSFMGAEFQYQISSSGDPQQATALLAPIVLGALAAYLFWIDTTKR</sequence>
<keyword id="KW-0051">Antiviral defense</keyword>
<keyword id="KW-0997">Cell inner membrane</keyword>
<keyword id="KW-1003">Cell membrane</keyword>
<keyword id="KW-0378">Hydrolase</keyword>
<keyword id="KW-0472">Membrane</keyword>
<keyword id="KW-0547">Nucleotide-binding</keyword>
<keyword id="KW-0812">Transmembrane</keyword>
<keyword id="KW-1133">Transmembrane helix</keyword>
<comment type="function">
    <text evidence="6">Pycsar (pyrimidine cyclase system for antiphage resistance) provides immunity against bacteriophage. The pyrimidine cyclase (PycC) synthesizes cyclic nucleotides in response to infection; these serve as specific second messenger signals. The signals activate the adjacent effector, leading to bacterial cell death and abortive phage infection. A clade B Pycsar system.</text>
</comment>
<comment type="function">
    <text evidence="6">The effector gene of a two-gene Pycsar system. Expression of this and adjacent uridylate cyclase RsmPycC (AC A0A1V0HUX5) probably confers resistance to bacteriophage. The genes are probably only expressed in response to bacteriophage infection. Probably only responds to cUMP (produced by its cognate NTP cyclase), it may act by degrading NAD(+) and/or by impairing membrane integrity.</text>
</comment>
<comment type="catalytic activity">
    <reaction evidence="6">
        <text>NAD(+) + H2O = ADP-D-ribose + nicotinamide + H(+)</text>
        <dbReference type="Rhea" id="RHEA:16301"/>
        <dbReference type="ChEBI" id="CHEBI:15377"/>
        <dbReference type="ChEBI" id="CHEBI:15378"/>
        <dbReference type="ChEBI" id="CHEBI:17154"/>
        <dbReference type="ChEBI" id="CHEBI:57540"/>
        <dbReference type="ChEBI" id="CHEBI:57967"/>
        <dbReference type="EC" id="3.2.2.5"/>
    </reaction>
</comment>
<comment type="subcellular location">
    <subcellularLocation>
        <location evidence="5">Cell inner membrane</location>
        <topology evidence="1">Multi-pass membrane protein</topology>
    </subcellularLocation>
</comment>
<comment type="domain">
    <text evidence="6">Has an N-terminal cyclic nucleotide-binding domain and a C-terminal transmembrane domain that may also be a Toll/interleukin-1 receptor-like domain (TIR) that might have NAD(+) hydrolase activity.</text>
</comment>
<protein>
    <recommendedName>
        <fullName>Pycsar effector protein RsmPycTIR</fullName>
        <shortName evidence="3">RsmPycTIR</shortName>
        <ecNumber evidence="6">3.2.2.5</ecNumber>
    </recommendedName>
</protein>
<accession>A0A1V0HUU2</accession>
<proteinExistence type="inferred from homology"/>
<dbReference type="EC" id="3.2.2.5" evidence="6"/>
<dbReference type="EMBL" id="CP020384">
    <property type="protein sequence ID" value="ARC87742.1"/>
    <property type="molecule type" value="Genomic_DNA"/>
</dbReference>
<dbReference type="RefSeq" id="WP_080615290.1">
    <property type="nucleotide sequence ID" value="NZ_CP020384.1"/>
</dbReference>
<dbReference type="SMR" id="A0A1V0HUU2"/>
<dbReference type="STRING" id="308754.B5V46_03435"/>
<dbReference type="KEGG" id="rhm:B5V46_03435"/>
<dbReference type="OrthoDB" id="5497289at2"/>
<dbReference type="Proteomes" id="UP000191232">
    <property type="component" value="Chromosome"/>
</dbReference>
<dbReference type="GO" id="GO:0005886">
    <property type="term" value="C:plasma membrane"/>
    <property type="evidence" value="ECO:0007669"/>
    <property type="project" value="UniProtKB-SubCell"/>
</dbReference>
<dbReference type="GO" id="GO:0016787">
    <property type="term" value="F:hydrolase activity"/>
    <property type="evidence" value="ECO:0007669"/>
    <property type="project" value="UniProtKB-KW"/>
</dbReference>
<dbReference type="GO" id="GO:0000166">
    <property type="term" value="F:nucleotide binding"/>
    <property type="evidence" value="ECO:0007669"/>
    <property type="project" value="UniProtKB-KW"/>
</dbReference>
<dbReference type="GO" id="GO:0051607">
    <property type="term" value="P:defense response to virus"/>
    <property type="evidence" value="ECO:0007669"/>
    <property type="project" value="UniProtKB-KW"/>
</dbReference>
<dbReference type="CDD" id="cd00038">
    <property type="entry name" value="CAP_ED"/>
    <property type="match status" value="1"/>
</dbReference>
<dbReference type="Gene3D" id="2.60.120.10">
    <property type="entry name" value="Jelly Rolls"/>
    <property type="match status" value="1"/>
</dbReference>
<dbReference type="InterPro" id="IPR000595">
    <property type="entry name" value="cNMP-bd_dom"/>
</dbReference>
<dbReference type="InterPro" id="IPR018490">
    <property type="entry name" value="cNMP-bd_dom_sf"/>
</dbReference>
<dbReference type="InterPro" id="IPR014710">
    <property type="entry name" value="RmlC-like_jellyroll"/>
</dbReference>
<dbReference type="Pfam" id="PF00027">
    <property type="entry name" value="cNMP_binding"/>
    <property type="match status" value="1"/>
</dbReference>
<dbReference type="SUPFAM" id="SSF51206">
    <property type="entry name" value="cAMP-binding domain-like"/>
    <property type="match status" value="1"/>
</dbReference>
<dbReference type="PROSITE" id="PS50042">
    <property type="entry name" value="CNMP_BINDING_3"/>
    <property type="match status" value="1"/>
</dbReference>
<organism>
    <name type="scientific">Rhodovulum sp. (strain MB263)</name>
    <dbReference type="NCBI Taxonomy" id="308754"/>
    <lineage>
        <taxon>Bacteria</taxon>
        <taxon>Pseudomonadati</taxon>
        <taxon>Pseudomonadota</taxon>
        <taxon>Alphaproteobacteria</taxon>
        <taxon>Rhodobacterales</taxon>
        <taxon>Paracoccaceae</taxon>
        <taxon>Rhodovulum</taxon>
    </lineage>
</organism>
<feature type="chain" id="PRO_0000455239" description="Pycsar effector protein RsmPycTIR">
    <location>
        <begin position="1"/>
        <end position="259"/>
    </location>
</feature>
<feature type="transmembrane region" description="Helical" evidence="1">
    <location>
        <begin position="136"/>
        <end position="156"/>
    </location>
</feature>
<feature type="transmembrane region" description="Helical" evidence="1">
    <location>
        <begin position="169"/>
        <end position="189"/>
    </location>
</feature>
<feature type="transmembrane region" description="Helical" evidence="1">
    <location>
        <begin position="234"/>
        <end position="254"/>
    </location>
</feature>
<feature type="region of interest" description="TIR-like" evidence="6">
    <location>
        <begin position="126"/>
        <end position="229"/>
    </location>
</feature>
<feature type="binding site" evidence="2">
    <location>
        <begin position="1"/>
        <end position="120"/>
    </location>
    <ligand>
        <name>a nucleoside 3',5'-cyclic phosphate</name>
        <dbReference type="ChEBI" id="CHEBI:58464"/>
    </ligand>
</feature>
<evidence type="ECO:0000255" key="1"/>
<evidence type="ECO:0000255" key="2">
    <source>
        <dbReference type="PROSITE-ProRule" id="PRU00060"/>
    </source>
</evidence>
<evidence type="ECO:0000303" key="3">
    <source>
    </source>
</evidence>
<evidence type="ECO:0000303" key="4">
    <source ref="1"/>
</evidence>
<evidence type="ECO:0000305" key="5"/>
<evidence type="ECO:0000305" key="6">
    <source>
    </source>
</evidence>
<gene>
    <name evidence="3" type="primary">pycTIR</name>
    <name evidence="4" type="ORF">B5V46_03435</name>
</gene>